<name>ACPS_BACCQ</name>
<keyword id="KW-0963">Cytoplasm</keyword>
<keyword id="KW-0275">Fatty acid biosynthesis</keyword>
<keyword id="KW-0276">Fatty acid metabolism</keyword>
<keyword id="KW-0444">Lipid biosynthesis</keyword>
<keyword id="KW-0443">Lipid metabolism</keyword>
<keyword id="KW-0460">Magnesium</keyword>
<keyword id="KW-0479">Metal-binding</keyword>
<keyword id="KW-0808">Transferase</keyword>
<accession>B9J0N5</accession>
<dbReference type="EC" id="2.7.8.7" evidence="1"/>
<dbReference type="EMBL" id="CP000227">
    <property type="protein sequence ID" value="ACM10769.1"/>
    <property type="molecule type" value="Genomic_DNA"/>
</dbReference>
<dbReference type="SMR" id="B9J0N5"/>
<dbReference type="KEGG" id="bcq:BCQ_0266"/>
<dbReference type="HOGENOM" id="CLU_089696_1_2_9"/>
<dbReference type="Proteomes" id="UP000000441">
    <property type="component" value="Chromosome"/>
</dbReference>
<dbReference type="GO" id="GO:0005829">
    <property type="term" value="C:cytosol"/>
    <property type="evidence" value="ECO:0007669"/>
    <property type="project" value="TreeGrafter"/>
</dbReference>
<dbReference type="GO" id="GO:0008897">
    <property type="term" value="F:holo-[acyl-carrier-protein] synthase activity"/>
    <property type="evidence" value="ECO:0007669"/>
    <property type="project" value="UniProtKB-UniRule"/>
</dbReference>
<dbReference type="GO" id="GO:0000287">
    <property type="term" value="F:magnesium ion binding"/>
    <property type="evidence" value="ECO:0007669"/>
    <property type="project" value="UniProtKB-UniRule"/>
</dbReference>
<dbReference type="GO" id="GO:0006633">
    <property type="term" value="P:fatty acid biosynthetic process"/>
    <property type="evidence" value="ECO:0007669"/>
    <property type="project" value="UniProtKB-UniRule"/>
</dbReference>
<dbReference type="GO" id="GO:0019878">
    <property type="term" value="P:lysine biosynthetic process via aminoadipic acid"/>
    <property type="evidence" value="ECO:0007669"/>
    <property type="project" value="TreeGrafter"/>
</dbReference>
<dbReference type="Gene3D" id="3.90.470.20">
    <property type="entry name" value="4'-phosphopantetheinyl transferase domain"/>
    <property type="match status" value="1"/>
</dbReference>
<dbReference type="HAMAP" id="MF_00101">
    <property type="entry name" value="AcpS"/>
    <property type="match status" value="1"/>
</dbReference>
<dbReference type="InterPro" id="IPR008278">
    <property type="entry name" value="4-PPantetheinyl_Trfase_dom"/>
</dbReference>
<dbReference type="InterPro" id="IPR037143">
    <property type="entry name" value="4-PPantetheinyl_Trfase_dom_sf"/>
</dbReference>
<dbReference type="InterPro" id="IPR002582">
    <property type="entry name" value="ACPS"/>
</dbReference>
<dbReference type="InterPro" id="IPR050559">
    <property type="entry name" value="P-Pant_transferase_sf"/>
</dbReference>
<dbReference type="InterPro" id="IPR004568">
    <property type="entry name" value="Ppantetheine-prot_Trfase_dom"/>
</dbReference>
<dbReference type="NCBIfam" id="TIGR00516">
    <property type="entry name" value="acpS"/>
    <property type="match status" value="1"/>
</dbReference>
<dbReference type="NCBIfam" id="TIGR00556">
    <property type="entry name" value="pantethn_trn"/>
    <property type="match status" value="1"/>
</dbReference>
<dbReference type="PANTHER" id="PTHR12215:SF10">
    <property type="entry name" value="L-AMINOADIPATE-SEMIALDEHYDE DEHYDROGENASE-PHOSPHOPANTETHEINYL TRANSFERASE"/>
    <property type="match status" value="1"/>
</dbReference>
<dbReference type="PANTHER" id="PTHR12215">
    <property type="entry name" value="PHOSPHOPANTETHEINE TRANSFERASE"/>
    <property type="match status" value="1"/>
</dbReference>
<dbReference type="Pfam" id="PF01648">
    <property type="entry name" value="ACPS"/>
    <property type="match status" value="1"/>
</dbReference>
<dbReference type="SUPFAM" id="SSF56214">
    <property type="entry name" value="4'-phosphopantetheinyl transferase"/>
    <property type="match status" value="1"/>
</dbReference>
<evidence type="ECO:0000255" key="1">
    <source>
        <dbReference type="HAMAP-Rule" id="MF_00101"/>
    </source>
</evidence>
<comment type="function">
    <text evidence="1">Transfers the 4'-phosphopantetheine moiety from coenzyme A to a Ser of acyl-carrier-protein.</text>
</comment>
<comment type="catalytic activity">
    <reaction evidence="1">
        <text>apo-[ACP] + CoA = holo-[ACP] + adenosine 3',5'-bisphosphate + H(+)</text>
        <dbReference type="Rhea" id="RHEA:12068"/>
        <dbReference type="Rhea" id="RHEA-COMP:9685"/>
        <dbReference type="Rhea" id="RHEA-COMP:9690"/>
        <dbReference type="ChEBI" id="CHEBI:15378"/>
        <dbReference type="ChEBI" id="CHEBI:29999"/>
        <dbReference type="ChEBI" id="CHEBI:57287"/>
        <dbReference type="ChEBI" id="CHEBI:58343"/>
        <dbReference type="ChEBI" id="CHEBI:64479"/>
        <dbReference type="EC" id="2.7.8.7"/>
    </reaction>
</comment>
<comment type="cofactor">
    <cofactor evidence="1">
        <name>Mg(2+)</name>
        <dbReference type="ChEBI" id="CHEBI:18420"/>
    </cofactor>
</comment>
<comment type="subcellular location">
    <subcellularLocation>
        <location evidence="1">Cytoplasm</location>
    </subcellularLocation>
</comment>
<comment type="similarity">
    <text evidence="1">Belongs to the P-Pant transferase superfamily. AcpS family.</text>
</comment>
<proteinExistence type="inferred from homology"/>
<reference key="1">
    <citation type="journal article" date="2009" name="J. Bacteriol.">
        <title>Complete genome sequence of the extremophilic Bacillus cereus strain Q1 with industrial applications.</title>
        <authorList>
            <person name="Xiong Z."/>
            <person name="Jiang Y."/>
            <person name="Qi D."/>
            <person name="Lu H."/>
            <person name="Yang F."/>
            <person name="Yang J."/>
            <person name="Chen L."/>
            <person name="Sun L."/>
            <person name="Xu X."/>
            <person name="Xue Y."/>
            <person name="Zhu Y."/>
            <person name="Jin Q."/>
        </authorList>
    </citation>
    <scope>NUCLEOTIDE SEQUENCE [LARGE SCALE GENOMIC DNA]</scope>
    <source>
        <strain>Q1</strain>
    </source>
</reference>
<gene>
    <name evidence="1" type="primary">acpS</name>
    <name type="ordered locus">BCQ_0266</name>
</gene>
<feature type="chain" id="PRO_1000118793" description="Holo-[acyl-carrier-protein] synthase">
    <location>
        <begin position="1"/>
        <end position="119"/>
    </location>
</feature>
<feature type="binding site" evidence="1">
    <location>
        <position position="8"/>
    </location>
    <ligand>
        <name>Mg(2+)</name>
        <dbReference type="ChEBI" id="CHEBI:18420"/>
    </ligand>
</feature>
<feature type="binding site" evidence="1">
    <location>
        <position position="58"/>
    </location>
    <ligand>
        <name>Mg(2+)</name>
        <dbReference type="ChEBI" id="CHEBI:18420"/>
    </ligand>
</feature>
<protein>
    <recommendedName>
        <fullName evidence="1">Holo-[acyl-carrier-protein] synthase</fullName>
        <shortName evidence="1">Holo-ACP synthase</shortName>
        <ecNumber evidence="1">2.7.8.7</ecNumber>
    </recommendedName>
    <alternativeName>
        <fullName evidence="1">4'-phosphopantetheinyl transferase AcpS</fullName>
    </alternativeName>
</protein>
<sequence>MIVGIGIDIIELNRIEKMIDGKLKFMERILTESERNVAKGLKGSRLTEFVAGRFAAKEAYSKAVGTGIGKEVSFLDIEVRNDDRGKPILITSTEHIVHLSISHSKEFAVAQVVLESSSR</sequence>
<organism>
    <name type="scientific">Bacillus cereus (strain Q1)</name>
    <dbReference type="NCBI Taxonomy" id="361100"/>
    <lineage>
        <taxon>Bacteria</taxon>
        <taxon>Bacillati</taxon>
        <taxon>Bacillota</taxon>
        <taxon>Bacilli</taxon>
        <taxon>Bacillales</taxon>
        <taxon>Bacillaceae</taxon>
        <taxon>Bacillus</taxon>
        <taxon>Bacillus cereus group</taxon>
    </lineage>
</organism>